<proteinExistence type="evidence at transcript level"/>
<organism>
    <name type="scientific">Gloydius halys</name>
    <name type="common">Chinese water mocassin</name>
    <name type="synonym">Agkistrodon halys</name>
    <dbReference type="NCBI Taxonomy" id="8714"/>
    <lineage>
        <taxon>Eukaryota</taxon>
        <taxon>Metazoa</taxon>
        <taxon>Chordata</taxon>
        <taxon>Craniata</taxon>
        <taxon>Vertebrata</taxon>
        <taxon>Euteleostomi</taxon>
        <taxon>Lepidosauria</taxon>
        <taxon>Squamata</taxon>
        <taxon>Bifurcata</taxon>
        <taxon>Unidentata</taxon>
        <taxon>Episquamata</taxon>
        <taxon>Toxicofera</taxon>
        <taxon>Serpentes</taxon>
        <taxon>Colubroidea</taxon>
        <taxon>Viperidae</taxon>
        <taxon>Crotalinae</taxon>
        <taxon>Gloydius</taxon>
    </lineage>
</organism>
<sequence length="260" mass="29219">MVLIKVLANHLILQLSYAQKSSELVIGGDECNINEHRFLVALYHSRSRTFLCGGTLINQEWVLTAAHCDRFLMYIRLGMHNKNVKFDDEQRRFPKEKYFFACSNNFTKWDKDIMLIRLNRPVNNSEHIAPLSLPSNPPSVGSVCRVMGWGTITSPNETLPDVPHCANINLLHYSVCQAAYPKLPVTRRLLCAGILEGGIDSCHRDSGGPLICNGQFQGIVSWGRYPCAQPRVPGIYIKVFDYTDWIQSIIAGNTAVNCPP</sequence>
<feature type="signal peptide" evidence="3">
    <location>
        <begin position="1"/>
        <end position="18"/>
    </location>
</feature>
<feature type="propeptide" id="PRO_0000296197" evidence="1">
    <location>
        <begin position="19"/>
        <end position="24"/>
    </location>
</feature>
<feature type="chain" id="PRO_0000296198" description="Snake venom serine protease salmobin">
    <location>
        <begin position="25"/>
        <end position="260"/>
    </location>
</feature>
<feature type="domain" description="Peptidase S1" evidence="4">
    <location>
        <begin position="25"/>
        <end position="251"/>
    </location>
</feature>
<feature type="active site" description="Charge relay system" evidence="2">
    <location>
        <position position="67"/>
    </location>
</feature>
<feature type="active site" description="Charge relay system" evidence="2">
    <location>
        <position position="112"/>
    </location>
</feature>
<feature type="active site" description="Charge relay system" evidence="2">
    <location>
        <position position="206"/>
    </location>
</feature>
<feature type="glycosylation site" description="N-linked (GlcNAc...) asparagine" evidence="3">
    <location>
        <position position="105"/>
    </location>
</feature>
<feature type="glycosylation site" description="N-linked (GlcNAc...) asparagine" evidence="3">
    <location>
        <position position="123"/>
    </location>
</feature>
<feature type="glycosylation site" description="N-linked (GlcNAc...) asparagine" evidence="3">
    <location>
        <position position="156"/>
    </location>
</feature>
<feature type="disulfide bond" evidence="4">
    <location>
        <begin position="31"/>
        <end position="165"/>
    </location>
</feature>
<feature type="disulfide bond" evidence="4">
    <location>
        <begin position="52"/>
        <end position="68"/>
    </location>
</feature>
<feature type="disulfide bond" evidence="4">
    <location>
        <begin position="102"/>
        <end position="258"/>
    </location>
</feature>
<feature type="disulfide bond" evidence="4">
    <location>
        <begin position="144"/>
        <end position="212"/>
    </location>
</feature>
<feature type="disulfide bond" evidence="4">
    <location>
        <begin position="176"/>
        <end position="191"/>
    </location>
</feature>
<feature type="disulfide bond" evidence="4">
    <location>
        <begin position="202"/>
        <end position="227"/>
    </location>
</feature>
<feature type="sequence conflict" description="In Ref. 2; AAC61838." evidence="5" ref="2">
    <original>KVLANH</original>
    <variation>RVIANL</variation>
    <location>
        <begin position="5"/>
        <end position="10"/>
    </location>
</feature>
<feature type="sequence conflict" description="In Ref. 2; AAC61838." evidence="5" ref="2">
    <original>D</original>
    <variation>V</variation>
    <location>
        <position position="161"/>
    </location>
</feature>
<feature type="sequence conflict" description="In Ref. 2; AAC61838." evidence="5" ref="2">
    <original>N</original>
    <variation>T</variation>
    <location>
        <position position="257"/>
    </location>
</feature>
<reference key="1">
    <citation type="journal article" date="2001" name="Enzyme Microb. Technol.">
        <title>Cell surface display of salmobin, a thrombin-like enzyme from Agkistrodon halys venom on Escherichia coli using ice nucleation protein.</title>
        <authorList>
            <person name="Jeong H."/>
            <person name="Yoo S."/>
            <person name="Kim E."/>
        </authorList>
    </citation>
    <scope>NUCLEOTIDE SEQUENCE [MRNA]</scope>
    <source>
        <tissue>Venom gland</tissue>
    </source>
</reference>
<reference key="2">
    <citation type="submission" date="1997-07" db="EMBL/GenBank/DDBJ databases">
        <authorList>
            <person name="Chung K.H."/>
            <person name="Koh Y.S."/>
            <person name="Yun Y.D."/>
            <person name="Kim D.-S."/>
        </authorList>
    </citation>
    <scope>NUCLEOTIDE SEQUENCE [MRNA]</scope>
    <source>
        <tissue>Venom gland</tissue>
    </source>
</reference>
<evidence type="ECO:0000250" key="1"/>
<evidence type="ECO:0000250" key="2">
    <source>
        <dbReference type="UniProtKB" id="Q9I8X1"/>
    </source>
</evidence>
<evidence type="ECO:0000255" key="3"/>
<evidence type="ECO:0000255" key="4">
    <source>
        <dbReference type="PROSITE-ProRule" id="PRU00274"/>
    </source>
</evidence>
<evidence type="ECO:0000305" key="5"/>
<dbReference type="EC" id="3.4.21.-"/>
<dbReference type="EMBL" id="AF056033">
    <property type="protein sequence ID" value="AAC13280.1"/>
    <property type="molecule type" value="mRNA"/>
</dbReference>
<dbReference type="EMBL" id="AF015727">
    <property type="protein sequence ID" value="AAC61838.1"/>
    <property type="molecule type" value="mRNA"/>
</dbReference>
<dbReference type="SMR" id="O73800"/>
<dbReference type="MEROPS" id="S01.338"/>
<dbReference type="GO" id="GO:0005576">
    <property type="term" value="C:extracellular region"/>
    <property type="evidence" value="ECO:0007669"/>
    <property type="project" value="UniProtKB-SubCell"/>
</dbReference>
<dbReference type="GO" id="GO:0030141">
    <property type="term" value="C:secretory granule"/>
    <property type="evidence" value="ECO:0007669"/>
    <property type="project" value="TreeGrafter"/>
</dbReference>
<dbReference type="GO" id="GO:0004252">
    <property type="term" value="F:serine-type endopeptidase activity"/>
    <property type="evidence" value="ECO:0007669"/>
    <property type="project" value="InterPro"/>
</dbReference>
<dbReference type="GO" id="GO:0090729">
    <property type="term" value="F:toxin activity"/>
    <property type="evidence" value="ECO:0007669"/>
    <property type="project" value="UniProtKB-KW"/>
</dbReference>
<dbReference type="GO" id="GO:0006508">
    <property type="term" value="P:proteolysis"/>
    <property type="evidence" value="ECO:0007669"/>
    <property type="project" value="UniProtKB-KW"/>
</dbReference>
<dbReference type="CDD" id="cd00190">
    <property type="entry name" value="Tryp_SPc"/>
    <property type="match status" value="1"/>
</dbReference>
<dbReference type="FunFam" id="2.40.10.10:FF:000158">
    <property type="entry name" value="Thrombin-like enzyme saxthrombin"/>
    <property type="match status" value="1"/>
</dbReference>
<dbReference type="FunFam" id="2.40.10.10:FF:000153">
    <property type="entry name" value="Venom plasminogen activator TSV-PA"/>
    <property type="match status" value="1"/>
</dbReference>
<dbReference type="Gene3D" id="2.40.10.10">
    <property type="entry name" value="Trypsin-like serine proteases"/>
    <property type="match status" value="2"/>
</dbReference>
<dbReference type="InterPro" id="IPR009003">
    <property type="entry name" value="Peptidase_S1_PA"/>
</dbReference>
<dbReference type="InterPro" id="IPR043504">
    <property type="entry name" value="Peptidase_S1_PA_chymotrypsin"/>
</dbReference>
<dbReference type="InterPro" id="IPR001314">
    <property type="entry name" value="Peptidase_S1A"/>
</dbReference>
<dbReference type="InterPro" id="IPR001254">
    <property type="entry name" value="Trypsin_dom"/>
</dbReference>
<dbReference type="InterPro" id="IPR018114">
    <property type="entry name" value="TRYPSIN_HIS"/>
</dbReference>
<dbReference type="PANTHER" id="PTHR24271:SF47">
    <property type="entry name" value="KALLIKREIN-1"/>
    <property type="match status" value="1"/>
</dbReference>
<dbReference type="PANTHER" id="PTHR24271">
    <property type="entry name" value="KALLIKREIN-RELATED"/>
    <property type="match status" value="1"/>
</dbReference>
<dbReference type="Pfam" id="PF00089">
    <property type="entry name" value="Trypsin"/>
    <property type="match status" value="1"/>
</dbReference>
<dbReference type="PRINTS" id="PR00722">
    <property type="entry name" value="CHYMOTRYPSIN"/>
</dbReference>
<dbReference type="SMART" id="SM00020">
    <property type="entry name" value="Tryp_SPc"/>
    <property type="match status" value="1"/>
</dbReference>
<dbReference type="SUPFAM" id="SSF50494">
    <property type="entry name" value="Trypsin-like serine proteases"/>
    <property type="match status" value="1"/>
</dbReference>
<dbReference type="PROSITE" id="PS50240">
    <property type="entry name" value="TRYPSIN_DOM"/>
    <property type="match status" value="1"/>
</dbReference>
<dbReference type="PROSITE" id="PS00134">
    <property type="entry name" value="TRYPSIN_HIS"/>
    <property type="match status" value="1"/>
</dbReference>
<comment type="function">
    <text evidence="1">Snake venom serine protease that may act in the hemostasis system of the prey.</text>
</comment>
<comment type="subunit">
    <text evidence="1">Monomer.</text>
</comment>
<comment type="subcellular location">
    <subcellularLocation>
        <location>Secreted</location>
    </subcellularLocation>
</comment>
<comment type="tissue specificity">
    <text>Expressed by the venom gland.</text>
</comment>
<comment type="similarity">
    <text evidence="4">Belongs to the peptidase S1 family. Snake venom subfamily.</text>
</comment>
<keyword id="KW-1015">Disulfide bond</keyword>
<keyword id="KW-0325">Glycoprotein</keyword>
<keyword id="KW-1199">Hemostasis impairing toxin</keyword>
<keyword id="KW-0378">Hydrolase</keyword>
<keyword id="KW-0645">Protease</keyword>
<keyword id="KW-0964">Secreted</keyword>
<keyword id="KW-0720">Serine protease</keyword>
<keyword id="KW-0732">Signal</keyword>
<keyword id="KW-0800">Toxin</keyword>
<keyword id="KW-0865">Zymogen</keyword>
<accession>O73800</accession>
<accession>O93502</accession>
<protein>
    <recommendedName>
        <fullName>Snake venom serine protease salmobin</fullName>
        <shortName>SVSP</shortName>
        <ecNumber>3.4.21.-</ecNumber>
    </recommendedName>
</protein>
<name>VSPSN_GLOHA</name>